<keyword id="KW-1003">Cell membrane</keyword>
<keyword id="KW-1015">Disulfide bond</keyword>
<keyword id="KW-0325">Glycoprotein</keyword>
<keyword id="KW-0393">Immunoglobulin domain</keyword>
<keyword id="KW-0472">Membrane</keyword>
<keyword id="KW-1185">Reference proteome</keyword>
<keyword id="KW-0732">Signal</keyword>
<keyword id="KW-0812">Transmembrane</keyword>
<keyword id="KW-1133">Transmembrane helix</keyword>
<dbReference type="EMBL" id="AF216748">
    <property type="protein sequence ID" value="AAF45150.1"/>
    <property type="molecule type" value="mRNA"/>
</dbReference>
<dbReference type="EMBL" id="AB023132">
    <property type="protein sequence ID" value="BAA82126.1"/>
    <property type="molecule type" value="mRNA"/>
</dbReference>
<dbReference type="EMBL" id="AJ250559">
    <property type="protein sequence ID" value="CAB71153.1"/>
    <property type="molecule type" value="mRNA"/>
</dbReference>
<dbReference type="EMBL" id="AF327185">
    <property type="protein sequence ID" value="AAG48732.1"/>
    <property type="molecule type" value="Genomic_DNA"/>
</dbReference>
<dbReference type="EMBL" id="AF327184">
    <property type="protein sequence ID" value="AAG48732.1"/>
    <property type="status" value="JOINED"/>
    <property type="molecule type" value="Genomic_DNA"/>
</dbReference>
<dbReference type="EMBL" id="AF257230">
    <property type="protein sequence ID" value="AAF70099.1"/>
    <property type="molecule type" value="mRNA"/>
</dbReference>
<dbReference type="EMBL" id="BC034852">
    <property type="protein sequence ID" value="AAH34852.1"/>
    <property type="molecule type" value="mRNA"/>
</dbReference>
<dbReference type="CCDS" id="CCDS14994.1"/>
<dbReference type="RefSeq" id="NP_059508.2">
    <property type="nucleotide sequence ID" value="NM_017480.3"/>
</dbReference>
<dbReference type="RefSeq" id="XP_006496201.1">
    <property type="nucleotide sequence ID" value="XM_006496138.3"/>
</dbReference>
<dbReference type="RefSeq" id="XP_006496202.1">
    <property type="nucleotide sequence ID" value="XM_006496139.3"/>
</dbReference>
<dbReference type="SMR" id="Q9WVS0"/>
<dbReference type="CORUM" id="Q9WVS0"/>
<dbReference type="FunCoup" id="Q9WVS0">
    <property type="interactions" value="681"/>
</dbReference>
<dbReference type="IntAct" id="Q9WVS0">
    <property type="interactions" value="2"/>
</dbReference>
<dbReference type="STRING" id="10090.ENSMUSP00000099891"/>
<dbReference type="GlyCosmos" id="Q9WVS0">
    <property type="glycosylation" value="3 sites, No reported glycans"/>
</dbReference>
<dbReference type="GlyGen" id="Q9WVS0">
    <property type="glycosylation" value="3 sites"/>
</dbReference>
<dbReference type="iPTMnet" id="Q9WVS0"/>
<dbReference type="PhosphoSitePlus" id="Q9WVS0"/>
<dbReference type="PaxDb" id="10090-ENSMUSP00000099891"/>
<dbReference type="ProteomicsDB" id="273088"/>
<dbReference type="Antibodypedia" id="34168">
    <property type="antibodies" value="1133 antibodies from 44 providers"/>
</dbReference>
<dbReference type="DNASU" id="54167"/>
<dbReference type="Ensembl" id="ENSMUST00000102827.4">
    <property type="protein sequence ID" value="ENSMUSP00000099891.4"/>
    <property type="gene ID" value="ENSMUSG00000026009.15"/>
</dbReference>
<dbReference type="GeneID" id="54167"/>
<dbReference type="KEGG" id="mmu:54167"/>
<dbReference type="UCSC" id="uc011wlz.2">
    <property type="organism name" value="mouse"/>
</dbReference>
<dbReference type="AGR" id="MGI:1858745"/>
<dbReference type="CTD" id="29851"/>
<dbReference type="MGI" id="MGI:1858745">
    <property type="gene designation" value="Icos"/>
</dbReference>
<dbReference type="VEuPathDB" id="HostDB:ENSMUSG00000026009"/>
<dbReference type="eggNOG" id="ENOG502S59F">
    <property type="taxonomic scope" value="Eukaryota"/>
</dbReference>
<dbReference type="GeneTree" id="ENSGT00390000000801"/>
<dbReference type="HOGENOM" id="CLU_1315009_0_0_1"/>
<dbReference type="InParanoid" id="Q9WVS0"/>
<dbReference type="OMA" id="QDKEDCF"/>
<dbReference type="OrthoDB" id="69807at9989"/>
<dbReference type="TreeFam" id="TF335679"/>
<dbReference type="Reactome" id="R-MMU-1257604">
    <property type="pathway name" value="PIP3 activates AKT signaling"/>
</dbReference>
<dbReference type="Reactome" id="R-MMU-6811558">
    <property type="pathway name" value="PI5P, PP2A and IER3 Regulate PI3K/AKT Signaling"/>
</dbReference>
<dbReference type="Reactome" id="R-MMU-9927354">
    <property type="pathway name" value="Co-stimulation by ICOS"/>
</dbReference>
<dbReference type="BioGRID-ORCS" id="54167">
    <property type="hits" value="0 hits in 79 CRISPR screens"/>
</dbReference>
<dbReference type="PRO" id="PR:Q9WVS0"/>
<dbReference type="Proteomes" id="UP000000589">
    <property type="component" value="Chromosome 1"/>
</dbReference>
<dbReference type="RNAct" id="Q9WVS0">
    <property type="molecule type" value="protein"/>
</dbReference>
<dbReference type="Bgee" id="ENSMUSG00000026009">
    <property type="expression patterns" value="Expressed in peripheral lymph node and 44 other cell types or tissues"/>
</dbReference>
<dbReference type="ExpressionAtlas" id="Q9WVS0">
    <property type="expression patterns" value="baseline and differential"/>
</dbReference>
<dbReference type="GO" id="GO:0009897">
    <property type="term" value="C:external side of plasma membrane"/>
    <property type="evidence" value="ECO:0000314"/>
    <property type="project" value="MGI"/>
</dbReference>
<dbReference type="GO" id="GO:0005886">
    <property type="term" value="C:plasma membrane"/>
    <property type="evidence" value="ECO:0000314"/>
    <property type="project" value="MGI"/>
</dbReference>
<dbReference type="GO" id="GO:0031295">
    <property type="term" value="P:T cell costimulation"/>
    <property type="evidence" value="ECO:0007669"/>
    <property type="project" value="InterPro"/>
</dbReference>
<dbReference type="FunFam" id="2.60.40.10:FF:000874">
    <property type="entry name" value="Inducible T-cell costimulator"/>
    <property type="match status" value="1"/>
</dbReference>
<dbReference type="Gene3D" id="2.60.40.10">
    <property type="entry name" value="Immunoglobulins"/>
    <property type="match status" value="1"/>
</dbReference>
<dbReference type="InterPro" id="IPR039943">
    <property type="entry name" value="ICOS"/>
</dbReference>
<dbReference type="InterPro" id="IPR013783">
    <property type="entry name" value="Ig-like_fold"/>
</dbReference>
<dbReference type="InterPro" id="IPR013106">
    <property type="entry name" value="Ig_V-set"/>
</dbReference>
<dbReference type="PANTHER" id="PTHR20904:SF0">
    <property type="entry name" value="INDUCIBLE T-CELL COSTIMULATOR"/>
    <property type="match status" value="1"/>
</dbReference>
<dbReference type="PANTHER" id="PTHR20904">
    <property type="entry name" value="INDUCIBLE T-CELL COSTIMULATOR ICOS"/>
    <property type="match status" value="1"/>
</dbReference>
<dbReference type="Pfam" id="PF15910">
    <property type="entry name" value="V-set_2"/>
    <property type="match status" value="1"/>
</dbReference>
<name>ICOS_MOUSE</name>
<evidence type="ECO:0000250" key="1">
    <source>
        <dbReference type="UniProtKB" id="Q9Y6W8"/>
    </source>
</evidence>
<evidence type="ECO:0000255" key="2"/>
<evidence type="ECO:0000269" key="3">
    <source>
    </source>
</evidence>
<evidence type="ECO:0000269" key="4">
    <source>
    </source>
</evidence>
<evidence type="ECO:0000269" key="5">
    <source>
    </source>
</evidence>
<evidence type="ECO:0000269" key="6">
    <source>
    </source>
</evidence>
<evidence type="ECO:0000269" key="7">
    <source>
    </source>
</evidence>
<evidence type="ECO:0000269" key="8">
    <source>
    </source>
</evidence>
<evidence type="ECO:0000269" key="9">
    <source>
    </source>
</evidence>
<evidence type="ECO:0000269" key="10">
    <source>
    </source>
</evidence>
<evidence type="ECO:0000305" key="11"/>
<organism>
    <name type="scientific">Mus musculus</name>
    <name type="common">Mouse</name>
    <dbReference type="NCBI Taxonomy" id="10090"/>
    <lineage>
        <taxon>Eukaryota</taxon>
        <taxon>Metazoa</taxon>
        <taxon>Chordata</taxon>
        <taxon>Craniata</taxon>
        <taxon>Vertebrata</taxon>
        <taxon>Euteleostomi</taxon>
        <taxon>Mammalia</taxon>
        <taxon>Eutheria</taxon>
        <taxon>Euarchontoglires</taxon>
        <taxon>Glires</taxon>
        <taxon>Rodentia</taxon>
        <taxon>Myomorpha</taxon>
        <taxon>Muroidea</taxon>
        <taxon>Muridae</taxon>
        <taxon>Murinae</taxon>
        <taxon>Mus</taxon>
        <taxon>Mus</taxon>
    </lineage>
</organism>
<comment type="function">
    <text evidence="3 4 7 8 9 10">Stimulatory receptor expressed in activated or antigen-experienced T-cells that plays an important role in the immune response (PubMed:11343123). Upon binding to its ligand ICOSL expressed on antigen presenting cells (APCs), delivers costimulatory signals that enhances all basic T-cell responses to a foreign antigen, namely proliferation, secretion of lymphokines including IL10, up-regulation of molecules that mediate cell-cell interaction, and effective help for antibody secretion by B-cells (PubMed:10657606). Also acts as a costimulatory receptor critical for the differentiation of T follicular regulatory cells upon immune challenges such as viral infection (PubMed:36754569). Mechanistically, potentiates TCR-induced calcium flux by augmenting PLCG1 activation and actin remodeling (PubMed:27693916). In addition, activates PI3K signaling pathways independently of calcium flux (PubMed:19915142, PubMed:27693916). Essential both for efficient interaction between T and B-cells and for normal antibody responses to T-cell dependent antigens. Prevents the apoptosis of pre-activated T-cells. Plays a critical role in CD40-mediated class switching of immunoglobin isotypes (PubMed:11343122).</text>
</comment>
<comment type="subunit">
    <text evidence="1 4 5 9">Homodimer; disulfide-linked. Interacts with ICOSLG (PubMed:10657606). Interacts with PIK3R1 (PubMed:19915142). Interacts with TBK1; this interaction is critical for the maturation of T follicular regulatory cells (By similarity).</text>
</comment>
<comment type="interaction">
    <interactant intactId="EBI-16721736">
        <id>Q9WVS0</id>
    </interactant>
    <interactant intactId="EBI-641764">
        <id>P26450</id>
        <label>Pik3r1</label>
    </interactant>
    <organismsDiffer>false</organismsDiffer>
    <experiments>2</experiments>
</comment>
<comment type="subcellular location">
    <subcellularLocation>
        <location evidence="1">Cell membrane</location>
        <topology evidence="11">Single-pass type I membrane protein</topology>
    </subcellularLocation>
</comment>
<comment type="tissue specificity">
    <text evidence="3 5 6">Expressed on activated T-cells and resting memory T-cells. High expression seen in the thymic medulla and in the germinal centers and T-cell zones of lymph nodes and Peyer patches. Expressed at low levels in the spleen.</text>
</comment>
<comment type="PTM">
    <text evidence="5">N-glycosylated.</text>
</comment>
<reference key="1">
    <citation type="journal article" date="1999" name="Nature">
        <title>T-cell co-stimulation through B7RP-1 and ICOS.</title>
        <authorList>
            <person name="Yoshinaga S.K."/>
            <person name="Whoriskey J.S."/>
            <person name="Khare S.D."/>
            <person name="Sarmiento U."/>
            <person name="Guo J."/>
            <person name="Horan T."/>
            <person name="Shih G."/>
            <person name="Zhang M."/>
            <person name="Coccia M.A."/>
            <person name="Kohno T."/>
            <person name="Tafuri-Bladt A."/>
            <person name="Brankow D."/>
            <person name="Campbell P."/>
            <person name="Chang D."/>
            <person name="Chiu L."/>
            <person name="Dai T."/>
            <person name="Duncan G."/>
            <person name="Elliott G.S."/>
            <person name="Hui A."/>
            <person name="McCabe S.M."/>
            <person name="Scully S."/>
            <person name="Shahinian A."/>
            <person name="Shaklee C.L."/>
            <person name="Van G."/>
            <person name="Mak T.W."/>
            <person name="Senaldi G."/>
        </authorList>
    </citation>
    <scope>NUCLEOTIDE SEQUENCE</scope>
    <scope>FUNCTION</scope>
    <scope>TISSUE SPECIFICITY</scope>
    <source>
        <tissue>Intestinal epithelium</tissue>
    </source>
</reference>
<reference key="2">
    <citation type="journal article" date="2000" name="Biochem. Biophys. Res. Commun.">
        <title>Identification and characterization of rat AILIM/ICOS, a novel T-cell costimulatory molecule, related to the CD28/CTLA4 family.</title>
        <authorList>
            <person name="Tezuka K."/>
            <person name="Tsuji T."/>
            <person name="Hirano D."/>
            <person name="Tamatani T."/>
            <person name="Sakamaki K."/>
            <person name="Kobayashi Y."/>
            <person name="Kamada M."/>
        </authorList>
    </citation>
    <scope>NUCLEOTIDE SEQUENCE</scope>
    <scope>TISSUE SPECIFICITY</scope>
    <source>
        <tissue>Spleen</tissue>
    </source>
</reference>
<reference key="3">
    <citation type="journal article" date="2000" name="Eur. J. Immunol.">
        <title>Molecular cloning and characterization of murine ICOS and identification of B7h as ICOS ligand.</title>
        <authorList>
            <person name="Mages H.W."/>
            <person name="Hutloff A."/>
            <person name="Heuck C."/>
            <person name="Buechner K."/>
            <person name="Himmelbauer H."/>
            <person name="Oliveri F."/>
            <person name="Kroczek R.A."/>
        </authorList>
    </citation>
    <scope>NUCLEOTIDE SEQUENCE [MRNA]</scope>
    <scope>GLYCOSYLATION</scope>
    <scope>SUBUNIT</scope>
    <scope>TISSUE SPECIFICITY</scope>
    <source>
        <strain>BALB/cJ</strain>
        <tissue>Spleen</tissue>
    </source>
</reference>
<reference key="4">
    <citation type="journal article" date="2001" name="Nature">
        <title>The inducible costimulatory (ICOS) molecule is critical for CD40-mediated antibody class switching.</title>
        <authorList>
            <person name="McAdam A.J."/>
            <person name="Greenwald R.J."/>
            <person name="Levin M.A."/>
            <person name="Chernova T."/>
            <person name="Malenkovich N."/>
            <person name="Ling V."/>
            <person name="Freeman G.J."/>
            <person name="Sharpe A.H."/>
        </authorList>
    </citation>
    <scope>NUCLEOTIDE SEQUENCE</scope>
    <scope>FUNCTION</scope>
    <source>
        <strain>129/Ola</strain>
    </source>
</reference>
<reference key="5">
    <citation type="submission" date="2000-04" db="EMBL/GenBank/DDBJ databases">
        <title>CCLP, A novel molecule that regulates T cell activation.</title>
        <authorList>
            <person name="Wu D."/>
            <person name="Giannoni M.A."/>
            <person name="Kiesecker C.L."/>
            <person name="Faas S.J."/>
            <person name="Mickle A.P."/>
            <person name="Matis L.A."/>
            <person name="Rother R.P."/>
        </authorList>
    </citation>
    <scope>NUCLEOTIDE SEQUENCE</scope>
    <source>
        <strain>BALB/cJ</strain>
        <tissue>Spleen</tissue>
    </source>
</reference>
<reference key="6">
    <citation type="journal article" date="2004" name="Genome Res.">
        <title>The status, quality, and expansion of the NIH full-length cDNA project: the Mammalian Gene Collection (MGC).</title>
        <authorList>
            <consortium name="The MGC Project Team"/>
        </authorList>
    </citation>
    <scope>NUCLEOTIDE SEQUENCE [LARGE SCALE MRNA]</scope>
    <source>
        <tissue>Mammary gland</tissue>
    </source>
</reference>
<reference key="7">
    <citation type="journal article" date="2000" name="J. Immunol.">
        <title>Identification of GL50, a novel B7-like protein that functionally binds to ICOS receptor.</title>
        <authorList>
            <person name="Ling V."/>
            <person name="Wu P.W."/>
            <person name="Finnerty H.F."/>
            <person name="Bean K.M."/>
            <person name="Spaulding V."/>
            <person name="Fouser L.A."/>
            <person name="Leonard J.P."/>
            <person name="Hunter S.E."/>
            <person name="Zollner R."/>
            <person name="Thomas J.L."/>
            <person name="Miyashiro J.S."/>
            <person name="Jacobs K.A."/>
            <person name="Collins M."/>
        </authorList>
    </citation>
    <scope>FUNCTION</scope>
    <scope>INTERACTION WITH ICOSLG</scope>
</reference>
<reference key="8">
    <citation type="journal article" date="2001" name="Nature">
        <title>ICOS is essential for effective T-helper-cell responses.</title>
        <authorList>
            <person name="Tafuri A."/>
            <person name="Shahinian A."/>
            <person name="Bladt F."/>
            <person name="Yoshinaga S.K."/>
            <person name="Jordana M."/>
            <person name="Wakeham A."/>
            <person name="Boucher L.-M."/>
            <person name="Bouchard D."/>
            <person name="Chan V.S."/>
            <person name="Duncan G."/>
            <person name="Odermatt B."/>
            <person name="Ho A."/>
            <person name="Itie A."/>
            <person name="Horan T."/>
            <person name="Whoriskey J.S."/>
            <person name="Pawson T."/>
            <person name="Penninger J.M."/>
            <person name="Ohashi P.S."/>
            <person name="Mak T.W."/>
        </authorList>
    </citation>
    <scope>FUNCTION</scope>
</reference>
<reference key="9">
    <citation type="journal article" date="2009" name="Proc. Natl. Acad. Sci. U.S.A.">
        <title>Inducible costimulator promotes helper T-cell differentiation through phosphoinositide 3-kinase.</title>
        <authorList>
            <person name="Gigoux M."/>
            <person name="Shang J."/>
            <person name="Pak Y."/>
            <person name="Xu M."/>
            <person name="Choe J."/>
            <person name="Mak T.W."/>
            <person name="Suh W.K."/>
        </authorList>
    </citation>
    <scope>FUNCTION</scope>
    <scope>MUTAGENESIS OF TYR-181</scope>
    <scope>INTERACTION WITH PIK3R1</scope>
</reference>
<reference key="10">
    <citation type="journal article" date="2016" name="Mol. Immunol.">
        <title>Inducible costimulator (ICOS) potentiates TCR-induced calcium flux by augmenting PLCgamma1 activation and actin remodeling.</title>
        <authorList>
            <person name="Leconte J."/>
            <person name="Bagherzadeh Yazdchi S."/>
            <person name="Panneton V."/>
            <person name="Suh W.K."/>
        </authorList>
    </citation>
    <scope>FUNCTION</scope>
    <scope>MUTAGENESIS OF TYR-170 AND TYR-181</scope>
</reference>
<reference key="11">
    <citation type="journal article" date="2023" name="Life. Sci Alliance">
        <title>ICOS costimulation is indispensable for the differentiation of T follicular regulatory cells.</title>
        <authorList>
            <person name="Panneton V."/>
            <person name="Mindt B.C."/>
            <person name="Bouklouch Y."/>
            <person name="Bouchard A."/>
            <person name="Mohammaei S."/>
            <person name="Chang J."/>
            <person name="Diamantopoulos N."/>
            <person name="Witalis M."/>
            <person name="Li J."/>
            <person name="Stancescu A."/>
            <person name="Bradley J.E."/>
            <person name="Randall T.D."/>
            <person name="Fritz J.H."/>
            <person name="Suh W.K."/>
        </authorList>
    </citation>
    <scope>FUNCTION</scope>
</reference>
<gene>
    <name type="primary">Icos</name>
    <name type="synonym">Ailim</name>
</gene>
<accession>Q9WVS0</accession>
<accession>Q9JL17</accession>
<protein>
    <recommendedName>
        <fullName>Inducible T-cell costimulator</fullName>
    </recommendedName>
    <alternativeName>
        <fullName>Activation-inducible lymphocyte immunomediatory molecule</fullName>
    </alternativeName>
    <alternativeName>
        <fullName>CD28 and CTLA-4-like protein</fullName>
        <shortName>CCLP</shortName>
    </alternativeName>
    <alternativeName>
        <fullName>CD28-related protein 1</fullName>
        <shortName>CRP-1</shortName>
    </alternativeName>
    <cdAntigenName>CD278</cdAntigenName>
</protein>
<feature type="signal peptide" evidence="2">
    <location>
        <begin position="1"/>
        <end position="20"/>
    </location>
</feature>
<feature type="chain" id="PRO_0000014807" description="Inducible T-cell costimulator">
    <location>
        <begin position="21"/>
        <end position="200"/>
    </location>
</feature>
<feature type="topological domain" description="Extracellular" evidence="2">
    <location>
        <begin position="21"/>
        <end position="144"/>
    </location>
</feature>
<feature type="transmembrane region" description="Helical" evidence="2">
    <location>
        <begin position="145"/>
        <end position="165"/>
    </location>
</feature>
<feature type="topological domain" description="Cytoplasmic" evidence="2">
    <location>
        <begin position="166"/>
        <end position="200"/>
    </location>
</feature>
<feature type="domain" description="Ig-like V-type">
    <location>
        <begin position="30"/>
        <end position="133"/>
    </location>
</feature>
<feature type="glycosylation site" description="N-linked (GlcNAc...) asparagine" evidence="2">
    <location>
        <position position="23"/>
    </location>
</feature>
<feature type="glycosylation site" description="N-linked (GlcNAc...) asparagine" evidence="1">
    <location>
        <position position="89"/>
    </location>
</feature>
<feature type="glycosylation site" description="N-linked (GlcNAc...) asparagine" evidence="2">
    <location>
        <position position="123"/>
    </location>
</feature>
<feature type="disulfide bond" evidence="1">
    <location>
        <begin position="42"/>
        <end position="109"/>
    </location>
</feature>
<feature type="disulfide bond" evidence="1">
    <location>
        <begin position="63"/>
        <end position="83"/>
    </location>
</feature>
<feature type="mutagenesis site" description="Substantial decrease in calcium flux." evidence="10">
    <original>Y</original>
    <variation>F</variation>
    <location>
        <position position="170"/>
    </location>
</feature>
<feature type="mutagenesis site" description="Selectively abrogates PI3K-dependent signaling pathways AKT and ERK without affecting calcium signaling." evidence="9 10">
    <original>Y</original>
    <variation>F</variation>
    <location>
        <position position="181"/>
    </location>
</feature>
<feature type="sequence conflict" description="In Ref. 2, 3 and 5." evidence="11" ref="2 3 5">
    <original>R</original>
    <variation>H</variation>
    <location>
        <position position="7"/>
    </location>
</feature>
<sequence length="200" mass="22709">MKPYFCRVFVFCFLIRLLTGEINGSADHRMFSFHNGGVQISCKYPETVQQLKMRLFREREVLCELTKTKGSGNAVSIKNPMLCLYHLSNNSVSFFLNNPDSSQGSYYFCSLSIFDPPPFQERNLSGGYLHIYESQLCCQLKLWLPVGCAAFVVVLLFGCILIIWFSKKKYGSSVHDPNSEYMFMAAVNTNKKSRLAGVTS</sequence>
<proteinExistence type="evidence at protein level"/>